<gene>
    <name evidence="1" type="primary">mug</name>
    <name type="ordered locus">ECIAI1_3216</name>
</gene>
<protein>
    <recommendedName>
        <fullName evidence="1">G/U mismatch-specific DNA glycosylase</fullName>
        <ecNumber evidence="1">3.2.2.28</ecNumber>
    </recommendedName>
    <alternativeName>
        <fullName evidence="1">Double-strand-specific uracil glycosylase</fullName>
    </alternativeName>
    <alternativeName>
        <fullName evidence="1">Mismatch-specific uracil DNA-glycosylase</fullName>
        <shortName evidence="1">MUG</shortName>
    </alternativeName>
</protein>
<reference key="1">
    <citation type="journal article" date="2009" name="PLoS Genet.">
        <title>Organised genome dynamics in the Escherichia coli species results in highly diverse adaptive paths.</title>
        <authorList>
            <person name="Touchon M."/>
            <person name="Hoede C."/>
            <person name="Tenaillon O."/>
            <person name="Barbe V."/>
            <person name="Baeriswyl S."/>
            <person name="Bidet P."/>
            <person name="Bingen E."/>
            <person name="Bonacorsi S."/>
            <person name="Bouchier C."/>
            <person name="Bouvet O."/>
            <person name="Calteau A."/>
            <person name="Chiapello H."/>
            <person name="Clermont O."/>
            <person name="Cruveiller S."/>
            <person name="Danchin A."/>
            <person name="Diard M."/>
            <person name="Dossat C."/>
            <person name="Karoui M.E."/>
            <person name="Frapy E."/>
            <person name="Garry L."/>
            <person name="Ghigo J.M."/>
            <person name="Gilles A.M."/>
            <person name="Johnson J."/>
            <person name="Le Bouguenec C."/>
            <person name="Lescat M."/>
            <person name="Mangenot S."/>
            <person name="Martinez-Jehanne V."/>
            <person name="Matic I."/>
            <person name="Nassif X."/>
            <person name="Oztas S."/>
            <person name="Petit M.A."/>
            <person name="Pichon C."/>
            <person name="Rouy Z."/>
            <person name="Ruf C.S."/>
            <person name="Schneider D."/>
            <person name="Tourret J."/>
            <person name="Vacherie B."/>
            <person name="Vallenet D."/>
            <person name="Medigue C."/>
            <person name="Rocha E.P.C."/>
            <person name="Denamur E."/>
        </authorList>
    </citation>
    <scope>NUCLEOTIDE SEQUENCE [LARGE SCALE GENOMIC DNA]</scope>
    <source>
        <strain>IAI1</strain>
    </source>
</reference>
<evidence type="ECO:0000255" key="1">
    <source>
        <dbReference type="HAMAP-Rule" id="MF_01956"/>
    </source>
</evidence>
<sequence length="168" mass="18673">MVEDILAPGLRVVFCGINPGLSSAGTGFPFAHPANRFWKVIYQAGFTDRQLKPQEAQHLLDYRCGVTKLVDRPTVQANEVSKQELHAGGRKLIEKIEDYQPQALAILGKQAYEQGFSQRGAQWGKQTLTIGSTQIWVLPNPSGLSRVSLEKLVEAYRELDQALVVRGR</sequence>
<dbReference type="EC" id="3.2.2.28" evidence="1"/>
<dbReference type="EMBL" id="CU928160">
    <property type="protein sequence ID" value="CAR00030.1"/>
    <property type="molecule type" value="Genomic_DNA"/>
</dbReference>
<dbReference type="RefSeq" id="WP_000228937.1">
    <property type="nucleotide sequence ID" value="NC_011741.1"/>
</dbReference>
<dbReference type="SMR" id="B7LZL8"/>
<dbReference type="GeneID" id="93778924"/>
<dbReference type="KEGG" id="ecr:ECIAI1_3216"/>
<dbReference type="HOGENOM" id="CLU_042829_3_1_6"/>
<dbReference type="GO" id="GO:0005737">
    <property type="term" value="C:cytoplasm"/>
    <property type="evidence" value="ECO:0007669"/>
    <property type="project" value="UniProtKB-SubCell"/>
</dbReference>
<dbReference type="GO" id="GO:0003677">
    <property type="term" value="F:DNA binding"/>
    <property type="evidence" value="ECO:0007669"/>
    <property type="project" value="UniProtKB-KW"/>
</dbReference>
<dbReference type="GO" id="GO:0008263">
    <property type="term" value="F:pyrimidine-specific mismatch base pair DNA N-glycosylase activity"/>
    <property type="evidence" value="ECO:0007669"/>
    <property type="project" value="UniProtKB-UniRule"/>
</dbReference>
<dbReference type="GO" id="GO:0004844">
    <property type="term" value="F:uracil DNA N-glycosylase activity"/>
    <property type="evidence" value="ECO:0007669"/>
    <property type="project" value="TreeGrafter"/>
</dbReference>
<dbReference type="GO" id="GO:0006285">
    <property type="term" value="P:base-excision repair, AP site formation"/>
    <property type="evidence" value="ECO:0007669"/>
    <property type="project" value="UniProtKB-UniRule"/>
</dbReference>
<dbReference type="CDD" id="cd10028">
    <property type="entry name" value="UDG-F2_TDG_MUG"/>
    <property type="match status" value="1"/>
</dbReference>
<dbReference type="FunFam" id="3.40.470.10:FF:000003">
    <property type="entry name" value="G/U mismatch-specific DNA glycosylase"/>
    <property type="match status" value="1"/>
</dbReference>
<dbReference type="Gene3D" id="3.40.470.10">
    <property type="entry name" value="Uracil-DNA glycosylase-like domain"/>
    <property type="match status" value="1"/>
</dbReference>
<dbReference type="HAMAP" id="MF_01956">
    <property type="entry name" value="MUG"/>
    <property type="match status" value="1"/>
</dbReference>
<dbReference type="InterPro" id="IPR015637">
    <property type="entry name" value="MUG/TDG"/>
</dbReference>
<dbReference type="InterPro" id="IPR023502">
    <property type="entry name" value="MUG_bact"/>
</dbReference>
<dbReference type="InterPro" id="IPR005122">
    <property type="entry name" value="Uracil-DNA_glycosylase-like"/>
</dbReference>
<dbReference type="InterPro" id="IPR036895">
    <property type="entry name" value="Uracil-DNA_glycosylase-like_sf"/>
</dbReference>
<dbReference type="NCBIfam" id="NF007570">
    <property type="entry name" value="PRK10201.1"/>
    <property type="match status" value="1"/>
</dbReference>
<dbReference type="PANTHER" id="PTHR12159">
    <property type="entry name" value="G/T AND G/U MISMATCH-SPECIFIC DNA GLYCOSYLASE"/>
    <property type="match status" value="1"/>
</dbReference>
<dbReference type="PANTHER" id="PTHR12159:SF9">
    <property type="entry name" value="G_T MISMATCH-SPECIFIC THYMINE DNA GLYCOSYLASE"/>
    <property type="match status" value="1"/>
</dbReference>
<dbReference type="Pfam" id="PF03167">
    <property type="entry name" value="UDG"/>
    <property type="match status" value="1"/>
</dbReference>
<dbReference type="SUPFAM" id="SSF52141">
    <property type="entry name" value="Uracil-DNA glycosylase-like"/>
    <property type="match status" value="1"/>
</dbReference>
<accession>B7LZL8</accession>
<keyword id="KW-0963">Cytoplasm</keyword>
<keyword id="KW-0227">DNA damage</keyword>
<keyword id="KW-0228">DNA excision</keyword>
<keyword id="KW-0234">DNA repair</keyword>
<keyword id="KW-0238">DNA-binding</keyword>
<keyword id="KW-0378">Hydrolase</keyword>
<feature type="chain" id="PRO_1000188955" description="G/U mismatch-specific DNA glycosylase">
    <location>
        <begin position="1"/>
        <end position="168"/>
    </location>
</feature>
<proteinExistence type="inferred from homology"/>
<comment type="function">
    <text evidence="1">Excises ethenocytosine and uracil, which can arise by alkylation or deamination of cytosine, respectively, from the corresponding mispairs with guanine in ds-DNA. It is capable of hydrolyzing the carbon-nitrogen bond between the sugar-phosphate backbone of the DNA and the mispaired base. The complementary strand guanine functions in substrate recognition. Required for DNA damage lesion repair in stationary-phase cells.</text>
</comment>
<comment type="catalytic activity">
    <reaction evidence="1">
        <text>Specifically hydrolyzes mismatched double-stranded DNA and polynucleotides, releasing free uracil.</text>
        <dbReference type="EC" id="3.2.2.28"/>
    </reaction>
</comment>
<comment type="subunit">
    <text evidence="1">Binds DNA as a monomer.</text>
</comment>
<comment type="subcellular location">
    <subcellularLocation>
        <location evidence="1">Cytoplasm</location>
    </subcellularLocation>
</comment>
<comment type="similarity">
    <text evidence="1">Belongs to the uracil-DNA glycosylase (UDG) superfamily. TDG/mug family.</text>
</comment>
<organism>
    <name type="scientific">Escherichia coli O8 (strain IAI1)</name>
    <dbReference type="NCBI Taxonomy" id="585034"/>
    <lineage>
        <taxon>Bacteria</taxon>
        <taxon>Pseudomonadati</taxon>
        <taxon>Pseudomonadota</taxon>
        <taxon>Gammaproteobacteria</taxon>
        <taxon>Enterobacterales</taxon>
        <taxon>Enterobacteriaceae</taxon>
        <taxon>Escherichia</taxon>
    </lineage>
</organism>
<name>MUG_ECO8A</name>